<feature type="chain" id="PRO_0000343757" description="Protein Ycf2">
    <location>
        <begin position="1"/>
        <end position="2381"/>
    </location>
</feature>
<feature type="binding site" evidence="1">
    <location>
        <begin position="1655"/>
        <end position="1662"/>
    </location>
    <ligand>
        <name>ATP</name>
        <dbReference type="ChEBI" id="CHEBI:30616"/>
    </ligand>
</feature>
<dbReference type="EMBL" id="DQ821119">
    <property type="protein sequence ID" value="ABG79575.1"/>
    <property type="molecule type" value="Genomic_DNA"/>
</dbReference>
<dbReference type="RefSeq" id="YP_001023676.1">
    <property type="nucleotide sequence ID" value="NC_008829.1"/>
</dbReference>
<dbReference type="GeneID" id="4788241"/>
<dbReference type="GO" id="GO:0009570">
    <property type="term" value="C:chloroplast stroma"/>
    <property type="evidence" value="ECO:0007669"/>
    <property type="project" value="UniProtKB-SubCell"/>
</dbReference>
<dbReference type="GO" id="GO:0005524">
    <property type="term" value="F:ATP binding"/>
    <property type="evidence" value="ECO:0007669"/>
    <property type="project" value="UniProtKB-KW"/>
</dbReference>
<dbReference type="GO" id="GO:0016887">
    <property type="term" value="F:ATP hydrolysis activity"/>
    <property type="evidence" value="ECO:0007669"/>
    <property type="project" value="InterPro"/>
</dbReference>
<dbReference type="CDD" id="cd19505">
    <property type="entry name" value="RecA-like_Ycf2"/>
    <property type="match status" value="1"/>
</dbReference>
<dbReference type="Gene3D" id="1.10.8.60">
    <property type="match status" value="1"/>
</dbReference>
<dbReference type="Gene3D" id="3.40.50.300">
    <property type="entry name" value="P-loop containing nucleotide triphosphate hydrolases"/>
    <property type="match status" value="1"/>
</dbReference>
<dbReference type="HAMAP" id="MF_01330">
    <property type="entry name" value="Ycf2"/>
    <property type="match status" value="1"/>
</dbReference>
<dbReference type="InterPro" id="IPR003593">
    <property type="entry name" value="AAA+_ATPase"/>
</dbReference>
<dbReference type="InterPro" id="IPR003959">
    <property type="entry name" value="ATPase_AAA_core"/>
</dbReference>
<dbReference type="InterPro" id="IPR027417">
    <property type="entry name" value="P-loop_NTPase"/>
</dbReference>
<dbReference type="InterPro" id="IPR008543">
    <property type="entry name" value="Uncharacterised_Ycf2"/>
</dbReference>
<dbReference type="InterPro" id="IPR056777">
    <property type="entry name" value="Ycf2_N"/>
</dbReference>
<dbReference type="PANTHER" id="PTHR33078:SF92">
    <property type="entry name" value="PROTEIN YCF2"/>
    <property type="match status" value="1"/>
</dbReference>
<dbReference type="PANTHER" id="PTHR33078">
    <property type="entry name" value="PROTEIN YCF2-RELATED"/>
    <property type="match status" value="1"/>
</dbReference>
<dbReference type="Pfam" id="PF00004">
    <property type="entry name" value="AAA"/>
    <property type="match status" value="1"/>
</dbReference>
<dbReference type="Pfam" id="PF05695">
    <property type="entry name" value="Ycf2"/>
    <property type="match status" value="1"/>
</dbReference>
<dbReference type="SMART" id="SM00382">
    <property type="entry name" value="AAA"/>
    <property type="match status" value="1"/>
</dbReference>
<dbReference type="SUPFAM" id="SSF52540">
    <property type="entry name" value="P-loop containing nucleoside triphosphate hydrolases"/>
    <property type="match status" value="1"/>
</dbReference>
<accession>A2T308</accession>
<keyword id="KW-0067">ATP-binding</keyword>
<keyword id="KW-0150">Chloroplast</keyword>
<keyword id="KW-0547">Nucleotide-binding</keyword>
<keyword id="KW-0934">Plastid</keyword>
<reference key="1">
    <citation type="journal article" date="2007" name="Am. Fern J.">
        <title>The complete plastid genome sequence of Angiopteris evecta (G. Forst.) Hoffm. (Marattiaceae).</title>
        <authorList>
            <person name="Roper J.M."/>
            <person name="Hansen S.K."/>
            <person name="Wolf P.G."/>
            <person name="Karol K.G."/>
            <person name="Mandoli D.F."/>
            <person name="Everett K.D.E."/>
            <person name="Kuehl J.V."/>
            <person name="Boore J.L."/>
        </authorList>
    </citation>
    <scope>NUCLEOTIDE SEQUENCE [LARGE SCALE GENOMIC DNA]</scope>
</reference>
<name>YCF2_ANGEV</name>
<protein>
    <recommendedName>
        <fullName evidence="1">Protein Ycf2</fullName>
    </recommendedName>
</protein>
<proteinExistence type="inferred from homology"/>
<evidence type="ECO:0000255" key="1">
    <source>
        <dbReference type="HAMAP-Rule" id="MF_01330"/>
    </source>
</evidence>
<organism>
    <name type="scientific">Angiopteris evecta</name>
    <name type="common">Mule's foot fern</name>
    <name type="synonym">Polypodium evectum</name>
    <dbReference type="NCBI Taxonomy" id="13825"/>
    <lineage>
        <taxon>Eukaryota</taxon>
        <taxon>Viridiplantae</taxon>
        <taxon>Streptophyta</taxon>
        <taxon>Embryophyta</taxon>
        <taxon>Tracheophyta</taxon>
        <taxon>Polypodiopsida</taxon>
        <taxon>Marattiidae</taxon>
        <taxon>Marattiales</taxon>
        <taxon>Marattiaceae</taxon>
        <taxon>Angiopteris</taxon>
    </lineage>
</organism>
<comment type="function">
    <text evidence="1">Probable ATPase of unknown function. Its presence in a non-photosynthetic plant (Epifagus virginiana) and experiments in tobacco indicate that it has an essential function which is probably not related to photosynthesis.</text>
</comment>
<comment type="subcellular location">
    <subcellularLocation>
        <location evidence="1">Plastid</location>
        <location evidence="1">Chloroplast stroma</location>
    </subcellularLocation>
</comment>
<comment type="similarity">
    <text evidence="1">Belongs to the Ycf2 family.</text>
</comment>
<sequence>MEQKLVKNTSSLSKIPDHLKEINNIQNILILLTRLNLVRFLFGIFSNLEYIVKLFDFRILNSLILRDLRSSNNQRNKLLLKLLLLLVIPISLYRLNTKSLIERRYLDLAKIVNGYGNSNKVRERLKEHFESSYSSISPNIFNSSNREAITSATGLQEYYSDSPTKAQSYGIIPVSNTIDFSDPDWWKSWIIKDILPSWNISQSKVNEVQMLLSEKSIENLKNFFEFYIDIILCKPYDWKYDFDLYFVMNRNQNRNQDEEIDWKQVNRLDDTLFPSAIVAFCDKILFEVEGPLNRQGHQLDINLNFSRKYLFHTYISLSRREIKNWIDLIQPKGWIFFQDFAEFYIWQSYSNKNSPWKGDRHLLDRTRHILEERFVDPNDLEEDQSITKVQYFLSDIIYNFSEYILSRIEKFNQLETLKKRIRDDSSLITQPLKDIFDNQKIIETNKRHHIENNFLDKEKGSTSSEKNSITTNFFLRFGFYNISLFRKWNWKQFLISNYLPTNIEYIKELNGESHFSDISFLIKNEKEYLENKIFSESKNSAIVDLFPTERRLFDNTIPKEIKYGLLDILSIHELNGSFIDNKQIFEKNRSLKTQEYLFDDSGSSEVNRIVDLWKIKNFEYSFFESSLSPKDCLSKSERYLNNKYSFLFFNKSLFLDSSSLIYSVVNFYINKDYVSSDYSRFKKTFVTKIDQLILRITNPGLLLTEGFSGNSNRYKNFLISKSDSSINQILYKYLKVKNIEYFSQKVLKDLIREYFKIGGINLGKTKEQMVSLWTLSQQKIRPFWDELKEKTNISLISLLTTIYKQNQLISLSSIYTVYSYQYIRILHSDYFLRVKNNFEFWINNDTSNDLTKNIISPDLVNWKINLEKWFNQCIVQIDQYRGVYLYLNVYKWRDGNRQWKSFFSYIVSNKYPIISVESKNLLKSLLLLRNEKISRNHFSKSLFLTKTFINRFLDYSFPYMIEPFLYKLQDIDQFFFYRFPKLLKIPSYIASIKEFFGDENIFSKESKCFLDDKNFVSLTRLQILRDKNLSNFLCNEDICMEGLNDESIFAESNYWLNDVAVTKKISPKSCSDESNTLKLLDYLYNPRLNYNERLRPFEGKFITKGYDSTYKDILNNVPIRYNHQLFLSTPIRPFYGEKDTISFVQSQVFKKLLARSQRFNRQTLGYIDNLYKLLIALTRSNSFSHGNKNSYSFGKDLKNRLQIVNFDIGKSFFEADRSNQYQSFRTSSKLQDESTEYQPYPADELFPEFLSNLENHKMLHWLRRFLLYRYLTPKSFQEMIDNKFLKEKKKELETILLKEEYIIRSFYPININEVLDRISIYKTLQQENISNKWSLFRNYTPWFFTLEWWNYLNNLVSETFPEVLLNTNDLLDSNRSYIIRYINNLLTSLWLELKFRSKNENVDYLISKSDSFLVKEISNQKNKPFFKWSLLRFVNGHNVEFSAIVLLLIFIYGISRHYLPTLLGFNSISLWKRIEIIRYLMDPLQGFYLKKLMHSPSTKFMQTRDLLIYRVKRILKSINHMPFYFFIKGELDIWLYHRNGLDTFRPHKRKLTQHLTTNKIISHYGLNLNYGSNFLIKEPGLNYLRFLVETCQKDLIKYQICNFESAEKWVLSALQQKILFPQKIWQDNSLNIPSYQTPASLQLGSFPSKGILLIGPMETGRSYLIKNLAADSYLPSIRIPVNKLLYNKLDFKNTPATILSKQSLLRLNLLFESAEKMSPCIIWIQDIHELNINRFGHRSEADPKLLLCSVLKNISNSSFNSYTKNNIVIASTHMPTKVDPAIISPNRLDQLINLRILTNCQRQKEFPVLLGVKGFDSKADSAFLKKLGYKTMGYSKRDLSVLANEALLIGITLNTSFVCSDTIRLSLHKQISAVTYTDNESRFSLKYEILFYKIGKAIIRNTLINTSSIDFSFVQNNLLKRRFYFLSNWYLEPAITESTIKEFTILPHILGFLAGFAARDSWFILENKKENFIFIDKVVENDLNLSVAILEGLLTEFSYLEICEKKLDEVFVPPPQSKARNFLNMMQQGLSLNTNKQIVRKIDRYKSLSSVRSERNIPRSIAWSPRVWRISFLRSNIYESIRIPSESNRLYNLIVFYQNQDKLPKRNFDLNKIKSGQSVSHKRKEKFFGYKRSLGNMRQKQIQTLESQLENVLLREHFFKLGISNSSTQYQTQYDSSYQSILFLGGRFIWNSAGLIHPQNNLVFSRLDLFANEETVRRLYITYGVRRDREKHYSNEKIKQFFLHRGYDRNLMTKLVINWWKRLPFAEKKHFEFFNNNQMMRTFLQHPQLFSSVYLHQDCLLEDLQEKYARFNLSIHRQRWIRSNRLLFNDLSIYNMLFESYQYLLNLFLSNRSLLIQLTNILVGKKLILPNEIHDILYYFK</sequence>
<geneLocation type="chloroplast"/>
<gene>
    <name evidence="1" type="primary">ycf2</name>
</gene>